<reference key="1">
    <citation type="journal article" date="2007" name="Domest. Anim. Endocrinol.">
        <title>Purification and characterization of feline ghrelin and its possible role.</title>
        <authorList>
            <person name="Ida T."/>
            <person name="Miyazato M."/>
            <person name="Naganobu K."/>
            <person name="Nakahara K."/>
            <person name="Sato M."/>
            <person name="Lin X.Z."/>
            <person name="Kaiya H."/>
            <person name="Doi K."/>
            <person name="Noda S."/>
            <person name="Kubo A."/>
            <person name="Murakami N."/>
            <person name="Kangawa K."/>
        </authorList>
    </citation>
    <scope>NUCLEOTIDE SEQUENCE [MRNA] (ISOFORMS 1 AND 2)</scope>
    <scope>INDUCTION</scope>
    <scope>ACYLATION AT SER-26</scope>
    <scope>MASS SPECTROMETRY</scope>
    <source>
        <tissue>Stomach</tissue>
    </source>
</reference>
<feature type="signal peptide" evidence="1">
    <location>
        <begin position="1"/>
        <end position="23"/>
    </location>
</feature>
<feature type="peptide" id="PRO_0000019200" description="Ghrelin" evidence="1">
    <location>
        <begin position="24"/>
        <end position="51"/>
    </location>
</feature>
<feature type="propeptide" id="PRO_0000019201" description="Removed in mature form" evidence="1">
    <location>
        <begin position="52"/>
        <end position="75"/>
    </location>
</feature>
<feature type="peptide" id="PRO_0000045138" description="Obestatin" evidence="1">
    <location>
        <begin position="76"/>
        <end position="98"/>
    </location>
</feature>
<feature type="propeptide" id="PRO_0000045139" description="Removed in mature form" evidence="1">
    <location>
        <begin position="99"/>
        <end position="117"/>
    </location>
</feature>
<feature type="region of interest" description="Disordered" evidence="3">
    <location>
        <begin position="29"/>
        <end position="52"/>
    </location>
</feature>
<feature type="compositionally biased region" description="Basic and acidic residues" evidence="3">
    <location>
        <begin position="31"/>
        <end position="43"/>
    </location>
</feature>
<feature type="modified residue" description="Leucine amide" evidence="1">
    <location>
        <position position="98"/>
    </location>
</feature>
<feature type="lipid moiety-binding region" description="O-decanoyl serine; alternate" evidence="4">
    <location>
        <position position="26"/>
    </location>
</feature>
<feature type="lipid moiety-binding region" description="O-hexanoyl serine; alternate" evidence="2">
    <location>
        <position position="26"/>
    </location>
</feature>
<feature type="lipid moiety-binding region" description="O-octanoyl serine; alternate" evidence="4">
    <location>
        <position position="26"/>
    </location>
</feature>
<feature type="splice variant" id="VSP_011626" description="In isoform 2." evidence="5">
    <location>
        <position position="37"/>
    </location>
</feature>
<proteinExistence type="evidence at protein level"/>
<keyword id="KW-0025">Alternative splicing</keyword>
<keyword id="KW-0027">Amidation</keyword>
<keyword id="KW-0372">Hormone</keyword>
<keyword id="KW-0449">Lipoprotein</keyword>
<keyword id="KW-1185">Reference proteome</keyword>
<keyword id="KW-0964">Secreted</keyword>
<keyword id="KW-0732">Signal</keyword>
<protein>
    <recommendedName>
        <fullName>Appetite-regulating hormone</fullName>
    </recommendedName>
    <alternativeName>
        <fullName>Growth hormone secretagogue</fullName>
    </alternativeName>
    <alternativeName>
        <fullName>Growth hormone-releasing peptide</fullName>
    </alternativeName>
    <alternativeName>
        <fullName>Motilin-related peptide</fullName>
    </alternativeName>
    <component>
        <recommendedName>
            <fullName>Ghrelin</fullName>
        </recommendedName>
    </component>
    <component>
        <recommendedName>
            <fullName>Obestatin</fullName>
        </recommendedName>
    </component>
</protein>
<evidence type="ECO:0000250" key="1"/>
<evidence type="ECO:0000250" key="2">
    <source>
        <dbReference type="UniProtKB" id="Q9EQX0"/>
    </source>
</evidence>
<evidence type="ECO:0000256" key="3">
    <source>
        <dbReference type="SAM" id="MobiDB-lite"/>
    </source>
</evidence>
<evidence type="ECO:0000269" key="4">
    <source>
    </source>
</evidence>
<evidence type="ECO:0000303" key="5">
    <source>
    </source>
</evidence>
<evidence type="ECO:0000305" key="6"/>
<sequence length="117" mass="12956">MPSPGTVCSLLLFSMLWADLAMAGSSFLSPEHQKVQQRKESKKPPAKLQPRALEGLIHPEDTSQVEGAEDELEIRFNAPFDVGIKLSGAQYHQHGQALGKFLQDVLWEEADEVLADE</sequence>
<accession>Q6BEG6</accession>
<accession>Q6BEG5</accession>
<dbReference type="EMBL" id="AB089201">
    <property type="protein sequence ID" value="BAD34670.1"/>
    <property type="molecule type" value="mRNA"/>
</dbReference>
<dbReference type="EMBL" id="AB089202">
    <property type="protein sequence ID" value="BAD34671.1"/>
    <property type="molecule type" value="mRNA"/>
</dbReference>
<dbReference type="RefSeq" id="NP_001009853.1">
    <molecule id="Q6BEG6-2"/>
    <property type="nucleotide sequence ID" value="NM_001009853.1"/>
</dbReference>
<dbReference type="SMR" id="Q6BEG6"/>
<dbReference type="FunCoup" id="Q6BEG6">
    <property type="interactions" value="5"/>
</dbReference>
<dbReference type="STRING" id="9685.ENSFCAP00000010442"/>
<dbReference type="PaxDb" id="9685-ENSFCAP00000010442"/>
<dbReference type="Ensembl" id="ENSFCAT00000011246.5">
    <molecule id="Q6BEG6-1"/>
    <property type="protein sequence ID" value="ENSFCAP00000010442.5"/>
    <property type="gene ID" value="ENSFCAG00000011244.5"/>
</dbReference>
<dbReference type="GeneID" id="493844"/>
<dbReference type="KEGG" id="fca:493844"/>
<dbReference type="CTD" id="51738"/>
<dbReference type="eggNOG" id="ENOG502SFY3">
    <property type="taxonomic scope" value="Eukaryota"/>
</dbReference>
<dbReference type="GeneTree" id="ENSGT00390000004064"/>
<dbReference type="HOGENOM" id="CLU_168380_0_0_1"/>
<dbReference type="InParanoid" id="Q6BEG6"/>
<dbReference type="OMA" id="QYQQYGR"/>
<dbReference type="OrthoDB" id="9896247at2759"/>
<dbReference type="TreeFam" id="TF336219"/>
<dbReference type="Proteomes" id="UP000011712">
    <property type="component" value="Chromosome A2"/>
</dbReference>
<dbReference type="Bgee" id="ENSFCAG00000011244">
    <property type="expression patterns" value="Expressed in spleen and 9 other cell types or tissues"/>
</dbReference>
<dbReference type="GO" id="GO:0005615">
    <property type="term" value="C:extracellular space"/>
    <property type="evidence" value="ECO:0000318"/>
    <property type="project" value="GO_Central"/>
</dbReference>
<dbReference type="GO" id="GO:0031768">
    <property type="term" value="F:ghrelin receptor binding"/>
    <property type="evidence" value="ECO:0000250"/>
    <property type="project" value="UniProtKB"/>
</dbReference>
<dbReference type="GO" id="GO:0016608">
    <property type="term" value="F:growth hormone-releasing hormone activity"/>
    <property type="evidence" value="ECO:0000250"/>
    <property type="project" value="UniProtKB"/>
</dbReference>
<dbReference type="GO" id="GO:0005179">
    <property type="term" value="F:hormone activity"/>
    <property type="evidence" value="ECO:0000250"/>
    <property type="project" value="UniProtKB"/>
</dbReference>
<dbReference type="GO" id="GO:0016358">
    <property type="term" value="P:dendrite development"/>
    <property type="evidence" value="ECO:0000250"/>
    <property type="project" value="UniProtKB"/>
</dbReference>
<dbReference type="GO" id="GO:0001696">
    <property type="term" value="P:gastric acid secretion"/>
    <property type="evidence" value="ECO:0000318"/>
    <property type="project" value="GO_Central"/>
</dbReference>
<dbReference type="GO" id="GO:0050728">
    <property type="term" value="P:negative regulation of inflammatory response"/>
    <property type="evidence" value="ECO:0000318"/>
    <property type="project" value="GO_Central"/>
</dbReference>
<dbReference type="GO" id="GO:0046676">
    <property type="term" value="P:negative regulation of insulin secretion"/>
    <property type="evidence" value="ECO:0000250"/>
    <property type="project" value="UniProtKB"/>
</dbReference>
<dbReference type="GO" id="GO:0007204">
    <property type="term" value="P:positive regulation of cytosolic calcium ion concentration"/>
    <property type="evidence" value="ECO:0000250"/>
    <property type="project" value="UniProtKB"/>
</dbReference>
<dbReference type="GO" id="GO:0060124">
    <property type="term" value="P:positive regulation of growth hormone secretion"/>
    <property type="evidence" value="ECO:0000318"/>
    <property type="project" value="GO_Central"/>
</dbReference>
<dbReference type="GO" id="GO:0032024">
    <property type="term" value="P:positive regulation of insulin secretion"/>
    <property type="evidence" value="ECO:0000250"/>
    <property type="project" value="UniProtKB"/>
</dbReference>
<dbReference type="GO" id="GO:0032097">
    <property type="term" value="P:positive regulation of response to food"/>
    <property type="evidence" value="ECO:0000250"/>
    <property type="project" value="UniProtKB"/>
</dbReference>
<dbReference type="GO" id="GO:0051965">
    <property type="term" value="P:positive regulation of synapse assembly"/>
    <property type="evidence" value="ECO:0000250"/>
    <property type="project" value="UniProtKB"/>
</dbReference>
<dbReference type="GO" id="GO:0032095">
    <property type="term" value="P:regulation of response to food"/>
    <property type="evidence" value="ECO:0000250"/>
    <property type="project" value="UniProtKB"/>
</dbReference>
<dbReference type="InterPro" id="IPR006737">
    <property type="entry name" value="Motilin_assoc"/>
</dbReference>
<dbReference type="InterPro" id="IPR006738">
    <property type="entry name" value="Motilin_ghrelin"/>
</dbReference>
<dbReference type="InterPro" id="IPR005441">
    <property type="entry name" value="Preproghrelin"/>
</dbReference>
<dbReference type="PANTHER" id="PTHR14122:SF1">
    <property type="entry name" value="APPETITE-REGULATING HORMONE"/>
    <property type="match status" value="1"/>
</dbReference>
<dbReference type="PANTHER" id="PTHR14122">
    <property type="entry name" value="GHRELIN PRECURSOR"/>
    <property type="match status" value="1"/>
</dbReference>
<dbReference type="Pfam" id="PF04643">
    <property type="entry name" value="Motilin_assoc"/>
    <property type="match status" value="1"/>
</dbReference>
<dbReference type="Pfam" id="PF04644">
    <property type="entry name" value="Motilin_ghrelin"/>
    <property type="match status" value="1"/>
</dbReference>
<dbReference type="PRINTS" id="PR01624">
    <property type="entry name" value="GHRELIN"/>
</dbReference>
<name>GHRL_FELCA</name>
<gene>
    <name type="primary">GHRL</name>
</gene>
<comment type="function">
    <molecule>Ghrelin</molecule>
    <text evidence="1">Ghrelin is the ligand for growth hormone secretagogue receptor type 1 (GHSR). Induces the release of growth hormone from the pituitary. Has an appetite-stimulating effect, induces adiposity and stimulates gastric acid secretion. Involved in growth regulation (By similarity).</text>
</comment>
<comment type="function">
    <molecule>Obestatin</molecule>
    <text evidence="1">Obestatin may be the ligand for GPR39. May have an appetite-reducing effect resulting in decreased food intake. May reduce gastric emptying activity and jejunal motility (By similarity).</text>
</comment>
<comment type="subcellular location">
    <subcellularLocation>
        <location>Secreted</location>
    </subcellularLocation>
</comment>
<comment type="alternative products">
    <event type="alternative splicing"/>
    <isoform>
        <id>Q6BEG6-1</id>
        <name>1</name>
        <name>Ghrelin</name>
        <sequence type="displayed"/>
    </isoform>
    <isoform>
        <id>Q6BEG6-2</id>
        <name>2</name>
        <name>des-Gln14-ghrelin</name>
        <sequence type="described" ref="VSP_011626"/>
    </isoform>
</comment>
<comment type="induction">
    <text evidence="4">2.5-fold increase in plasma level of ghrelin upon fasting.</text>
</comment>
<comment type="PTM">
    <text evidence="2 4">O-octanoylated by GOAT/MBOAT4 (By similarity). O-octanoylation or O-decanoylation is essential for ghrelin activity. The O-decanoylated forms Ghrelin-27-C10 and Ghrelin-28-C10 differ in the length of the carbon backbone of the carboxylic acid bound to Ser-26. A small fraction of ghrelin, ghrelin-27-C10:1, ghrelin-27-C10:2, ghrelin-28-C8:1, ghrelin-28-C10:1, and ghrelin-28-C10:2, may be modified with singly or doubly unsaturated carboxylic acids (PubMed:16466902).</text>
</comment>
<comment type="PTM">
    <text evidence="1">Amidation of Leu-98 is essential for obestatin activity.</text>
</comment>
<comment type="mass spectrometry" mass="3372.77" method="MALDI" evidence="4">
    <molecule>Ghrelin</molecule>
    <text>Ghrelin-28-C10, O-decanoylated form.</text>
</comment>
<comment type="mass spectrometry" mass="3371.22" method="MALDI" evidence="4">
    <molecule>Ghrelin</molecule>
    <text>Ghrelin-28-C10:1, O-decenoylated form.</text>
</comment>
<comment type="mass spectrometry" mass="3367.1" method="MALDI" evidence="4">
    <molecule>Ghrelin</molecule>
    <text>Ghrelin-28-C10:2, O-decadienoylated form.</text>
</comment>
<comment type="mass spectrometry" mass="3344.88" method="MALDI" evidence="4">
    <molecule>Ghrelin</molecule>
    <text>Ghrelin-28-C8, O-octanoylated form.</text>
</comment>
<comment type="mass spectrometry" mass="3343.21" method="MALDI" evidence="4">
    <molecule>Ghrelin</molecule>
    <text>Ghrelin-28-C1, O-octenoylated form.</text>
</comment>
<comment type="mass spectrometry" mass="3215.9" method="MALDI" evidence="4">
    <molecule>Ghrelin</molecule>
    <text>des-Gln14-Ghrelin-28-C8, O-octanoylated form.</text>
</comment>
<comment type="mass spectrometry" mass="3216.64" method="MALDI" evidence="4">
    <molecule>Ghrelin</molecule>
    <text>Ghrelin-27-C10, O-decanoylated form.</text>
</comment>
<comment type="mass spectrometry" mass="3214.92" method="MALDI" evidence="4">
    <molecule>Ghrelin</molecule>
    <text>Ghrelin-27-C10:1, O-decenoylated form.</text>
</comment>
<comment type="mass spectrometry" mass="3212.65" method="MALDI" evidence="4">
    <molecule>Ghrelin</molecule>
    <text>Ghrelin-27-C10:2, O-decadienoylated form.</text>
</comment>
<comment type="mass spectrometry" mass="3188.81" method="MALDI" evidence="4">
    <molecule>Ghrelin</molecule>
    <text>Ghrelin-27-C8, O-octanoylated form.</text>
</comment>
<comment type="mass spectrometry" mass="3060.36" method="MALDI" evidence="4">
    <molecule>Ghrelin</molecule>
    <text>des-Gln14-Ghrelin-27-C8, O-octanoylated form.</text>
</comment>
<comment type="similarity">
    <text evidence="6">Belongs to the motilin family.</text>
</comment>
<comment type="online information" name="Protein Spotlight">
    <link uri="https://www.proteinspotlight.org/back_issues/066"/>
    <text>Gut feelings - Issue 66 of January 2006</text>
</comment>
<organism>
    <name type="scientific">Felis catus</name>
    <name type="common">Cat</name>
    <name type="synonym">Felis silvestris catus</name>
    <dbReference type="NCBI Taxonomy" id="9685"/>
    <lineage>
        <taxon>Eukaryota</taxon>
        <taxon>Metazoa</taxon>
        <taxon>Chordata</taxon>
        <taxon>Craniata</taxon>
        <taxon>Vertebrata</taxon>
        <taxon>Euteleostomi</taxon>
        <taxon>Mammalia</taxon>
        <taxon>Eutheria</taxon>
        <taxon>Laurasiatheria</taxon>
        <taxon>Carnivora</taxon>
        <taxon>Feliformia</taxon>
        <taxon>Felidae</taxon>
        <taxon>Felinae</taxon>
        <taxon>Felis</taxon>
    </lineage>
</organism>